<dbReference type="EMBL" id="AC007191">
    <property type="status" value="NOT_ANNOTATED_CDS"/>
    <property type="molecule type" value="Genomic_DNA"/>
</dbReference>
<dbReference type="EMBL" id="BQ068066">
    <property type="status" value="NOT_ANNOTATED_CDS"/>
    <property type="molecule type" value="mRNA"/>
</dbReference>
<dbReference type="EMBL" id="BC021978">
    <property type="protein sequence ID" value="AAH21978.1"/>
    <property type="status" value="ALT_SEQ"/>
    <property type="molecule type" value="mRNA"/>
</dbReference>
<dbReference type="CCDS" id="CCDS46116.1"/>
<dbReference type="RefSeq" id="NP_001073938.1">
    <property type="nucleotide sequence ID" value="NM_001080469.2"/>
</dbReference>
<dbReference type="RefSeq" id="NP_001316561.1">
    <property type="nucleotide sequence ID" value="NM_001329632.1"/>
</dbReference>
<dbReference type="RefSeq" id="NP_001316562.1">
    <property type="nucleotide sequence ID" value="NM_001329633.2"/>
</dbReference>
<dbReference type="RefSeq" id="NP_001316563.1">
    <property type="nucleotide sequence ID" value="NM_001329634.1"/>
</dbReference>
<dbReference type="RefSeq" id="XP_047294494.1">
    <property type="nucleotide sequence ID" value="XM_047438538.1"/>
</dbReference>
<dbReference type="RefSeq" id="XP_047294495.1">
    <property type="nucleotide sequence ID" value="XM_047438539.1"/>
</dbReference>
<dbReference type="RefSeq" id="XP_054176371.1">
    <property type="nucleotide sequence ID" value="XM_054320396.1"/>
</dbReference>
<dbReference type="RefSeq" id="XP_054176372.1">
    <property type="nucleotide sequence ID" value="XM_054320397.1"/>
</dbReference>
<dbReference type="BioGRID" id="116976">
    <property type="interactions" value="38"/>
</dbReference>
<dbReference type="ComplexPortal" id="CPX-8005">
    <property type="entry name" value="SCF E3 ubiquitin ligase complex, FBXO46 variant"/>
</dbReference>
<dbReference type="DIP" id="DIP-52907N"/>
<dbReference type="FunCoup" id="Q6PJ61">
    <property type="interactions" value="1346"/>
</dbReference>
<dbReference type="IntAct" id="Q6PJ61">
    <property type="interactions" value="17"/>
</dbReference>
<dbReference type="STRING" id="9606.ENSP00000410007"/>
<dbReference type="iPTMnet" id="Q6PJ61"/>
<dbReference type="PhosphoSitePlus" id="Q6PJ61"/>
<dbReference type="BioMuta" id="FBXO46"/>
<dbReference type="DMDM" id="325511391"/>
<dbReference type="jPOST" id="Q6PJ61"/>
<dbReference type="MassIVE" id="Q6PJ61"/>
<dbReference type="PaxDb" id="9606-ENSP00000410007"/>
<dbReference type="PeptideAtlas" id="Q6PJ61"/>
<dbReference type="ProteomicsDB" id="67191"/>
<dbReference type="Pumba" id="Q6PJ61"/>
<dbReference type="Antibodypedia" id="31380">
    <property type="antibodies" value="68 antibodies from 14 providers"/>
</dbReference>
<dbReference type="DNASU" id="23403"/>
<dbReference type="Ensembl" id="ENST00000317683.4">
    <property type="protein sequence ID" value="ENSP00000410007.1"/>
    <property type="gene ID" value="ENSG00000177051.6"/>
</dbReference>
<dbReference type="GeneID" id="23403"/>
<dbReference type="KEGG" id="hsa:23403"/>
<dbReference type="MANE-Select" id="ENST00000317683.4">
    <property type="protein sequence ID" value="ENSP00000410007.1"/>
    <property type="RefSeq nucleotide sequence ID" value="NM_001080469.2"/>
    <property type="RefSeq protein sequence ID" value="NP_001073938.1"/>
</dbReference>
<dbReference type="UCSC" id="uc002pcz.4">
    <property type="organism name" value="human"/>
</dbReference>
<dbReference type="AGR" id="HGNC:25069"/>
<dbReference type="CTD" id="23403"/>
<dbReference type="DisGeNET" id="23403"/>
<dbReference type="GeneCards" id="FBXO46"/>
<dbReference type="HGNC" id="HGNC:25069">
    <property type="gene designation" value="FBXO46"/>
</dbReference>
<dbReference type="HPA" id="ENSG00000177051">
    <property type="expression patterns" value="Low tissue specificity"/>
</dbReference>
<dbReference type="MIM" id="609117">
    <property type="type" value="gene"/>
</dbReference>
<dbReference type="neXtProt" id="NX_Q6PJ61"/>
<dbReference type="OpenTargets" id="ENSG00000177051"/>
<dbReference type="VEuPathDB" id="HostDB:ENSG00000177051"/>
<dbReference type="eggNOG" id="KOG4564">
    <property type="taxonomic scope" value="Eukaryota"/>
</dbReference>
<dbReference type="GeneTree" id="ENSGT00530000064222"/>
<dbReference type="HOGENOM" id="CLU_028677_0_0_1"/>
<dbReference type="InParanoid" id="Q6PJ61"/>
<dbReference type="OMA" id="CHYFKSI"/>
<dbReference type="OrthoDB" id="10052741at2759"/>
<dbReference type="PAN-GO" id="Q6PJ61">
    <property type="GO annotations" value="0 GO annotations based on evolutionary models"/>
</dbReference>
<dbReference type="PhylomeDB" id="Q6PJ61"/>
<dbReference type="TreeFam" id="TF331673"/>
<dbReference type="PathwayCommons" id="Q6PJ61"/>
<dbReference type="SignaLink" id="Q6PJ61"/>
<dbReference type="UniPathway" id="UPA00143"/>
<dbReference type="BioGRID-ORCS" id="23403">
    <property type="hits" value="14 hits in 1197 CRISPR screens"/>
</dbReference>
<dbReference type="ChiTaRS" id="FBXO46">
    <property type="organism name" value="human"/>
</dbReference>
<dbReference type="GenomeRNAi" id="23403"/>
<dbReference type="Pharos" id="Q6PJ61">
    <property type="development level" value="Tdark"/>
</dbReference>
<dbReference type="PRO" id="PR:Q6PJ61"/>
<dbReference type="Proteomes" id="UP000005640">
    <property type="component" value="Chromosome 19"/>
</dbReference>
<dbReference type="RNAct" id="Q6PJ61">
    <property type="molecule type" value="protein"/>
</dbReference>
<dbReference type="Bgee" id="ENSG00000177051">
    <property type="expression patterns" value="Expressed in lower esophagus mucosa and 138 other cell types or tissues"/>
</dbReference>
<dbReference type="ExpressionAtlas" id="Q6PJ61">
    <property type="expression patterns" value="baseline and differential"/>
</dbReference>
<dbReference type="GO" id="GO:0019005">
    <property type="term" value="C:SCF ubiquitin ligase complex"/>
    <property type="evidence" value="ECO:0000314"/>
    <property type="project" value="UniProtKB"/>
</dbReference>
<dbReference type="GO" id="GO:1990756">
    <property type="term" value="F:ubiquitin-like ligase-substrate adaptor activity"/>
    <property type="evidence" value="ECO:0000314"/>
    <property type="project" value="UniProtKB"/>
</dbReference>
<dbReference type="GO" id="GO:0031146">
    <property type="term" value="P:SCF-dependent proteasomal ubiquitin-dependent protein catabolic process"/>
    <property type="evidence" value="ECO:0000314"/>
    <property type="project" value="UniProtKB"/>
</dbReference>
<dbReference type="CDD" id="cd22177">
    <property type="entry name" value="F-box_FBXO46"/>
    <property type="match status" value="1"/>
</dbReference>
<dbReference type="Gene3D" id="1.20.1280.50">
    <property type="match status" value="1"/>
</dbReference>
<dbReference type="InterPro" id="IPR036047">
    <property type="entry name" value="F-box-like_dom_sf"/>
</dbReference>
<dbReference type="InterPro" id="IPR001810">
    <property type="entry name" value="F-box_dom"/>
</dbReference>
<dbReference type="InterPro" id="IPR039594">
    <property type="entry name" value="FBXO34/46"/>
</dbReference>
<dbReference type="PANTHER" id="PTHR16271">
    <property type="entry name" value="F-BOX ONLY PROTEIN 34/46 FAMILY MEMBER"/>
    <property type="match status" value="1"/>
</dbReference>
<dbReference type="PANTHER" id="PTHR16271:SF10">
    <property type="entry name" value="F-BOX ONLY PROTEIN 46"/>
    <property type="match status" value="1"/>
</dbReference>
<dbReference type="Pfam" id="PF12937">
    <property type="entry name" value="F-box-like"/>
    <property type="match status" value="1"/>
</dbReference>
<dbReference type="SMART" id="SM00256">
    <property type="entry name" value="FBOX"/>
    <property type="match status" value="1"/>
</dbReference>
<dbReference type="SUPFAM" id="SSF81383">
    <property type="entry name" value="F-box domain"/>
    <property type="match status" value="1"/>
</dbReference>
<dbReference type="PROSITE" id="PS50181">
    <property type="entry name" value="FBOX"/>
    <property type="match status" value="1"/>
</dbReference>
<name>FBX46_HUMAN</name>
<sequence length="603" mass="64631">MDRGSLLPFQLWCPRPFGTYSQNQPRPPSAALKPSACPEPGGGAEPDHGPAHSENTPPALATEVPASQPAPLLSAAAAGDEGRVLLDTWYVIKPGNTKEKVAFFVAHQCGGGSRASSMKVKGHWGSDSSKAKRRRRCLDPTKAPPDPGGREGPPAAEEGPASAGEDVDLLSVAEMVALVEQRAALALQSYPRPTTPAPVVFVSAEQGGPAKGVGSERRSGGGDCSRVAEAVAHFEAQRDSPPTKGLRKEERPGPGPGEVRIAFRISNGREPRAPDSGLPSGGGGRPGCAYPGSPGPGARAKDKITCDLYQLISPSRDALPSNVEFLLARADEASEGDSPAPARPEDTPPAPPPPPARDCGASGFHVDVVVTGVVDECIFFGKDGTKNVKEETVCLTVSPEEPPPPGQLFFLQNRGPDGPPEPPPADSPATAPGPDDAEGTADTSLCRLYRHVSHDFLEIRFKIQRLLEPRQYMLLLPEHVLVKIFSFLPTRALAALKCTCHHFKGIIEAFGVRATDSRWSRDPLYRDDPCKQCRKRYEKGDVSLCRWHPKPYHHDLPYGRSYWMCCRRADRETPGCRLGLHDNNWVLPCNGPGGGRAGREEGR</sequence>
<evidence type="ECO:0000250" key="1">
    <source>
        <dbReference type="UniProtKB" id="Q5XUX0"/>
    </source>
</evidence>
<evidence type="ECO:0000255" key="2">
    <source>
        <dbReference type="PROSITE-ProRule" id="PRU00080"/>
    </source>
</evidence>
<evidence type="ECO:0000256" key="3">
    <source>
        <dbReference type="SAM" id="MobiDB-lite"/>
    </source>
</evidence>
<evidence type="ECO:0000269" key="4">
    <source>
    </source>
</evidence>
<evidence type="ECO:0000303" key="5">
    <source>
    </source>
</evidence>
<evidence type="ECO:0000305" key="6"/>
<evidence type="ECO:0000312" key="7">
    <source>
        <dbReference type="HGNC" id="HGNC:25069"/>
    </source>
</evidence>
<evidence type="ECO:0007744" key="8">
    <source>
    </source>
</evidence>
<evidence type="ECO:0007744" key="9">
    <source>
    </source>
</evidence>
<comment type="function">
    <text evidence="4">Substrate-recognition component of the SCF(FBXO46) protein ligase complex, which mediates the ubiquitination and degradation of target proteins (PubMed:30171069). In absence of stress, the SCF(FBXO46) complex catalyzes ubiquitination and degradation of MTOR-phosphorylated FBXO31 (PubMed:30171069).</text>
</comment>
<comment type="pathway">
    <text evidence="4">Protein modification; protein ubiquitination.</text>
</comment>
<comment type="subunit">
    <text evidence="1">Part of a SCF (SKP1-cullin-F-box) protein ligase complex SCF(FBXO46) composed of CUL1, SKP1, RBX1 and FBXO46.</text>
</comment>
<comment type="interaction">
    <interactant intactId="EBI-2322982">
        <id>Q6PJ61</id>
    </interactant>
    <interactant intactId="EBI-307486">
        <id>P63208</id>
        <label>SKP1</label>
    </interactant>
    <organismsDiffer>false</organismsDiffer>
    <experiments>7</experiments>
</comment>
<comment type="PTM">
    <text evidence="4">Phosphorylated by ATM in response to DNA damage, promoting ubiquitination and degradation by the SCF(FBXO31) complex.</text>
</comment>
<comment type="PTM">
    <text evidence="4">ATM-phosphorylated FBXO46 is ubiquitinated and degradaded by the SCF(FBXO31) complex in response to DNA damage.</text>
</comment>
<comment type="sequence caution" evidence="6">
    <conflict type="erroneous initiation">
        <sequence resource="EMBL-CDS" id="AAH21978"/>
    </conflict>
    <text>Truncated N-terminus.</text>
</comment>
<comment type="sequence caution" evidence="6">
    <conflict type="erroneous termination">
        <sequence resource="EMBL-CDS" id="AAH21978"/>
    </conflict>
    <text>Extended C-terminus.</text>
</comment>
<feature type="chain" id="PRO_0000119950" description="F-box only protein 46">
    <location>
        <begin position="1"/>
        <end position="603"/>
    </location>
</feature>
<feature type="domain" description="F-box" evidence="2">
    <location>
        <begin position="470"/>
        <end position="522"/>
    </location>
</feature>
<feature type="region of interest" description="Disordered" evidence="3">
    <location>
        <begin position="20"/>
        <end position="63"/>
    </location>
</feature>
<feature type="region of interest" description="Disordered" evidence="3">
    <location>
        <begin position="111"/>
        <end position="163"/>
    </location>
</feature>
<feature type="region of interest" description="Disordered" evidence="3">
    <location>
        <begin position="235"/>
        <end position="301"/>
    </location>
</feature>
<feature type="region of interest" description="Disordered" evidence="3">
    <location>
        <begin position="326"/>
        <end position="360"/>
    </location>
</feature>
<feature type="region of interest" description="Disordered" evidence="3">
    <location>
        <begin position="396"/>
        <end position="440"/>
    </location>
</feature>
<feature type="compositionally biased region" description="Low complexity" evidence="3">
    <location>
        <begin position="152"/>
        <end position="163"/>
    </location>
</feature>
<feature type="compositionally biased region" description="Pro residues" evidence="3">
    <location>
        <begin position="347"/>
        <end position="356"/>
    </location>
</feature>
<feature type="compositionally biased region" description="Pro residues" evidence="3">
    <location>
        <begin position="417"/>
        <end position="426"/>
    </location>
</feature>
<feature type="modified residue" description="Phosphoserine; by ATM" evidence="4">
    <location>
        <position position="21"/>
    </location>
</feature>
<feature type="modified residue" description="Phosphoserine; by ATM" evidence="4">
    <location>
        <position position="67"/>
    </location>
</feature>
<feature type="modified residue" description="Phosphoserine" evidence="8 9">
    <location>
        <position position="338"/>
    </location>
</feature>
<feature type="modified residue" description="Phosphothreonine" evidence="8 9">
    <location>
        <position position="347"/>
    </location>
</feature>
<feature type="mutagenesis site" description="Decreased degradation in response to genotoxic stress." evidence="4">
    <original>S</original>
    <variation>A</variation>
    <location>
        <position position="21"/>
    </location>
</feature>
<feature type="mutagenesis site" description="Decreased degradation in response to genotoxic stress." evidence="4">
    <original>S</original>
    <variation>A</variation>
    <location>
        <position position="67"/>
    </location>
</feature>
<feature type="mutagenesis site" description="Does not affect interaction with FBXO31." evidence="4">
    <original>E</original>
    <variation>A</variation>
    <location>
        <position position="216"/>
    </location>
</feature>
<feature type="mutagenesis site" description="Decreased interaction with FBXO31; when associated with 440-A--A-442." evidence="4">
    <original>R</original>
    <variation>A</variation>
    <location>
        <position position="217"/>
    </location>
</feature>
<feature type="mutagenesis site" description="Decreased interaction with FBXO31; when associated with A-217." evidence="4">
    <original>TAD</original>
    <variation>AAA</variation>
    <location>
        <begin position="440"/>
        <end position="442"/>
    </location>
</feature>
<organism>
    <name type="scientific">Homo sapiens</name>
    <name type="common">Human</name>
    <dbReference type="NCBI Taxonomy" id="9606"/>
    <lineage>
        <taxon>Eukaryota</taxon>
        <taxon>Metazoa</taxon>
        <taxon>Chordata</taxon>
        <taxon>Craniata</taxon>
        <taxon>Vertebrata</taxon>
        <taxon>Euteleostomi</taxon>
        <taxon>Mammalia</taxon>
        <taxon>Eutheria</taxon>
        <taxon>Euarchontoglires</taxon>
        <taxon>Primates</taxon>
        <taxon>Haplorrhini</taxon>
        <taxon>Catarrhini</taxon>
        <taxon>Hominidae</taxon>
        <taxon>Homo</taxon>
    </lineage>
</organism>
<keyword id="KW-0597">Phosphoprotein</keyword>
<keyword id="KW-1267">Proteomics identification</keyword>
<keyword id="KW-1185">Reference proteome</keyword>
<keyword id="KW-0832">Ubl conjugation</keyword>
<keyword id="KW-0833">Ubl conjugation pathway</keyword>
<accession>Q6PJ61</accession>
<reference key="1">
    <citation type="journal article" date="2004" name="Nature">
        <title>The DNA sequence and biology of human chromosome 19.</title>
        <authorList>
            <person name="Grimwood J."/>
            <person name="Gordon L.A."/>
            <person name="Olsen A.S."/>
            <person name="Terry A."/>
            <person name="Schmutz J."/>
            <person name="Lamerdin J.E."/>
            <person name="Hellsten U."/>
            <person name="Goodstein D."/>
            <person name="Couronne O."/>
            <person name="Tran-Gyamfi M."/>
            <person name="Aerts A."/>
            <person name="Altherr M."/>
            <person name="Ashworth L."/>
            <person name="Bajorek E."/>
            <person name="Black S."/>
            <person name="Branscomb E."/>
            <person name="Caenepeel S."/>
            <person name="Carrano A.V."/>
            <person name="Caoile C."/>
            <person name="Chan Y.M."/>
            <person name="Christensen M."/>
            <person name="Cleland C.A."/>
            <person name="Copeland A."/>
            <person name="Dalin E."/>
            <person name="Dehal P."/>
            <person name="Denys M."/>
            <person name="Detter J.C."/>
            <person name="Escobar J."/>
            <person name="Flowers D."/>
            <person name="Fotopulos D."/>
            <person name="Garcia C."/>
            <person name="Georgescu A.M."/>
            <person name="Glavina T."/>
            <person name="Gomez M."/>
            <person name="Gonzales E."/>
            <person name="Groza M."/>
            <person name="Hammon N."/>
            <person name="Hawkins T."/>
            <person name="Haydu L."/>
            <person name="Ho I."/>
            <person name="Huang W."/>
            <person name="Israni S."/>
            <person name="Jett J."/>
            <person name="Kadner K."/>
            <person name="Kimball H."/>
            <person name="Kobayashi A."/>
            <person name="Larionov V."/>
            <person name="Leem S.-H."/>
            <person name="Lopez F."/>
            <person name="Lou Y."/>
            <person name="Lowry S."/>
            <person name="Malfatti S."/>
            <person name="Martinez D."/>
            <person name="McCready P.M."/>
            <person name="Medina C."/>
            <person name="Morgan J."/>
            <person name="Nelson K."/>
            <person name="Nolan M."/>
            <person name="Ovcharenko I."/>
            <person name="Pitluck S."/>
            <person name="Pollard M."/>
            <person name="Popkie A.P."/>
            <person name="Predki P."/>
            <person name="Quan G."/>
            <person name="Ramirez L."/>
            <person name="Rash S."/>
            <person name="Retterer J."/>
            <person name="Rodriguez A."/>
            <person name="Rogers S."/>
            <person name="Salamov A."/>
            <person name="Salazar A."/>
            <person name="She X."/>
            <person name="Smith D."/>
            <person name="Slezak T."/>
            <person name="Solovyev V."/>
            <person name="Thayer N."/>
            <person name="Tice H."/>
            <person name="Tsai M."/>
            <person name="Ustaszewska A."/>
            <person name="Vo N."/>
            <person name="Wagner M."/>
            <person name="Wheeler J."/>
            <person name="Wu K."/>
            <person name="Xie G."/>
            <person name="Yang J."/>
            <person name="Dubchak I."/>
            <person name="Furey T.S."/>
            <person name="DeJong P."/>
            <person name="Dickson M."/>
            <person name="Gordon D."/>
            <person name="Eichler E.E."/>
            <person name="Pennacchio L.A."/>
            <person name="Richardson P."/>
            <person name="Stubbs L."/>
            <person name="Rokhsar D.S."/>
            <person name="Myers R.M."/>
            <person name="Rubin E.M."/>
            <person name="Lucas S.M."/>
        </authorList>
    </citation>
    <scope>NUCLEOTIDE SEQUENCE [LARGE SCALE GENOMIC DNA]</scope>
</reference>
<reference key="2">
    <citation type="submission" date="2002-03" db="EMBL/GenBank/DDBJ databases">
        <authorList>
            <consortium name="The MGC Project Team"/>
        </authorList>
    </citation>
    <scope>NUCLEOTIDE SEQUENCE [LARGE SCALE MRNA] OF 1-180</scope>
</reference>
<reference key="3">
    <citation type="unpublished observations" date="2004-04">
        <authorList>
            <person name="Roechert B."/>
        </authorList>
    </citation>
    <scope>RECONSTRUCTION FROM ESTS</scope>
    <scope>CONCEPTUAL TRANSLATION OF 1-163</scope>
</reference>
<reference key="4">
    <citation type="journal article" date="2004" name="Genome Res.">
        <title>The status, quality, and expansion of the NIH full-length cDNA project: the Mammalian Gene Collection (MGC).</title>
        <authorList>
            <consortium name="The MGC Project Team"/>
        </authorList>
    </citation>
    <scope>NUCLEOTIDE SEQUENCE [MRNA] OF 164-603</scope>
    <source>
        <tissue>Placenta</tissue>
    </source>
</reference>
<reference key="5">
    <citation type="journal article" date="2008" name="Proc. Natl. Acad. Sci. U.S.A.">
        <title>A quantitative atlas of mitotic phosphorylation.</title>
        <authorList>
            <person name="Dephoure N."/>
            <person name="Zhou C."/>
            <person name="Villen J."/>
            <person name="Beausoleil S.A."/>
            <person name="Bakalarski C.E."/>
            <person name="Elledge S.J."/>
            <person name="Gygi S.P."/>
        </authorList>
    </citation>
    <scope>PHOSPHORYLATION [LARGE SCALE ANALYSIS] AT SER-338 AND THR-347</scope>
    <scope>IDENTIFICATION BY MASS SPECTROMETRY [LARGE SCALE ANALYSIS]</scope>
    <source>
        <tissue>Cervix carcinoma</tissue>
    </source>
</reference>
<reference key="6">
    <citation type="journal article" date="2010" name="Sci. Signal.">
        <title>Quantitative phosphoproteomics reveals widespread full phosphorylation site occupancy during mitosis.</title>
        <authorList>
            <person name="Olsen J.V."/>
            <person name="Vermeulen M."/>
            <person name="Santamaria A."/>
            <person name="Kumar C."/>
            <person name="Miller M.L."/>
            <person name="Jensen L.J."/>
            <person name="Gnad F."/>
            <person name="Cox J."/>
            <person name="Jensen T.S."/>
            <person name="Nigg E.A."/>
            <person name="Brunak S."/>
            <person name="Mann M."/>
        </authorList>
    </citation>
    <scope>IDENTIFICATION BY MASS SPECTROMETRY [LARGE SCALE ANALYSIS]</scope>
    <source>
        <tissue>Cervix carcinoma</tissue>
    </source>
</reference>
<reference key="7">
    <citation type="journal article" date="2013" name="J. Proteome Res.">
        <title>Toward a comprehensive characterization of a human cancer cell phosphoproteome.</title>
        <authorList>
            <person name="Zhou H."/>
            <person name="Di Palma S."/>
            <person name="Preisinger C."/>
            <person name="Peng M."/>
            <person name="Polat A.N."/>
            <person name="Heck A.J."/>
            <person name="Mohammed S."/>
        </authorList>
    </citation>
    <scope>PHOSPHORYLATION [LARGE SCALE ANALYSIS] AT SER-338 AND THR-347</scope>
    <scope>IDENTIFICATION BY MASS SPECTROMETRY [LARGE SCALE ANALYSIS]</scope>
    <source>
        <tissue>Erythroleukemia</tissue>
    </source>
</reference>
<reference key="8">
    <citation type="journal article" date="2018" name="J. Biol. Chem.">
        <title>The SCFFBXO46 ubiquitin ligase complex mediates degradation of the tumor suppressor FBXO31 and thereby prevents premature cellular senescence.</title>
        <authorList>
            <person name="Choppara S."/>
            <person name="Ganga S."/>
            <person name="Manne R."/>
            <person name="Dutta P."/>
            <person name="Singh S."/>
            <person name="Santra M.K."/>
        </authorList>
    </citation>
    <scope>FUNCTION</scope>
    <scope>PATHWAY</scope>
    <scope>UBIQUITINATION</scope>
    <scope>PHOSPHORYLATION AT SER-21 AND SER-67</scope>
    <scope>MUTAGENESIS OF SER-21; SER-67; GLU-216; ARG-217 AND 440-THR--ASP-442</scope>
</reference>
<protein>
    <recommendedName>
        <fullName>F-box only protein 46</fullName>
    </recommendedName>
    <alternativeName>
        <fullName>F-box only protein 34-like</fullName>
    </alternativeName>
</protein>
<proteinExistence type="evidence at protein level"/>
<gene>
    <name evidence="5 7" type="primary">FBXO46</name>
    <name type="synonym">FBX46</name>
    <name type="synonym">FBXO34L</name>
</gene>